<name>PRMA_STAES</name>
<sequence>MNWMELSIVVNHEVEYDVTEILESYGSNGVVIEDSNILEEQPVDKFGEIYDLNPEDYPEKGVRLKAYFNEFTYNENLKSNINYEILSLQQIDKTIYDYQEKLIAEVDWENEWKNYFHPFRASKQFTIVPSWESYVKENDNELCIELDPGMAFGTGDHPTTSMCLKAIETFVKPTDSVIDVGTGSGILSIASHLLGVQRIKALDIDEMAVNVAKENFKKNHCDDAIEAVPGNLLKNENEKFNIVIANILAHIIEEMIEDTYNTLIEDGYFITSGIIEEKYQDIESQMKRIGFKIISVEHDNGWVCIVGQKVSG</sequence>
<reference key="1">
    <citation type="journal article" date="2003" name="Mol. Microbiol.">
        <title>Genome-based analysis of virulence genes in a non-biofilm-forming Staphylococcus epidermidis strain (ATCC 12228).</title>
        <authorList>
            <person name="Zhang Y.-Q."/>
            <person name="Ren S.-X."/>
            <person name="Li H.-L."/>
            <person name="Wang Y.-X."/>
            <person name="Fu G."/>
            <person name="Yang J."/>
            <person name="Qin Z.-Q."/>
            <person name="Miao Y.-G."/>
            <person name="Wang W.-Y."/>
            <person name="Chen R.-S."/>
            <person name="Shen Y."/>
            <person name="Chen Z."/>
            <person name="Yuan Z.-H."/>
            <person name="Zhao G.-P."/>
            <person name="Qu D."/>
            <person name="Danchin A."/>
            <person name="Wen Y.-M."/>
        </authorList>
    </citation>
    <scope>NUCLEOTIDE SEQUENCE [LARGE SCALE GENOMIC DNA]</scope>
    <source>
        <strain>ATCC 12228 / FDA PCI 1200</strain>
    </source>
</reference>
<gene>
    <name evidence="1" type="primary">prmA</name>
    <name type="ordered locus">SE_1265</name>
</gene>
<accession>Q8CSC7</accession>
<dbReference type="EC" id="2.1.1.-" evidence="1"/>
<dbReference type="EMBL" id="AE015929">
    <property type="protein sequence ID" value="AAO04864.1"/>
    <property type="molecule type" value="Genomic_DNA"/>
</dbReference>
<dbReference type="RefSeq" id="NP_764820.1">
    <property type="nucleotide sequence ID" value="NC_004461.1"/>
</dbReference>
<dbReference type="RefSeq" id="WP_001831256.1">
    <property type="nucleotide sequence ID" value="NZ_WBME01000008.1"/>
</dbReference>
<dbReference type="SMR" id="Q8CSC7"/>
<dbReference type="GeneID" id="50018619"/>
<dbReference type="KEGG" id="sep:SE_1265"/>
<dbReference type="PATRIC" id="fig|176280.10.peg.1234"/>
<dbReference type="eggNOG" id="COG2264">
    <property type="taxonomic scope" value="Bacteria"/>
</dbReference>
<dbReference type="HOGENOM" id="CLU_049382_0_1_9"/>
<dbReference type="OrthoDB" id="9785995at2"/>
<dbReference type="Proteomes" id="UP000001411">
    <property type="component" value="Chromosome"/>
</dbReference>
<dbReference type="GO" id="GO:0005737">
    <property type="term" value="C:cytoplasm"/>
    <property type="evidence" value="ECO:0007669"/>
    <property type="project" value="UniProtKB-SubCell"/>
</dbReference>
<dbReference type="GO" id="GO:0016279">
    <property type="term" value="F:protein-lysine N-methyltransferase activity"/>
    <property type="evidence" value="ECO:0007669"/>
    <property type="project" value="RHEA"/>
</dbReference>
<dbReference type="GO" id="GO:0032259">
    <property type="term" value="P:methylation"/>
    <property type="evidence" value="ECO:0007669"/>
    <property type="project" value="UniProtKB-KW"/>
</dbReference>
<dbReference type="CDD" id="cd02440">
    <property type="entry name" value="AdoMet_MTases"/>
    <property type="match status" value="1"/>
</dbReference>
<dbReference type="Gene3D" id="3.40.50.150">
    <property type="entry name" value="Vaccinia Virus protein VP39"/>
    <property type="match status" value="1"/>
</dbReference>
<dbReference type="HAMAP" id="MF_00735">
    <property type="entry name" value="Methyltr_PrmA"/>
    <property type="match status" value="1"/>
</dbReference>
<dbReference type="InterPro" id="IPR050078">
    <property type="entry name" value="Ribosomal_L11_MeTrfase_PrmA"/>
</dbReference>
<dbReference type="InterPro" id="IPR004498">
    <property type="entry name" value="Ribosomal_PrmA_MeTrfase"/>
</dbReference>
<dbReference type="InterPro" id="IPR029063">
    <property type="entry name" value="SAM-dependent_MTases_sf"/>
</dbReference>
<dbReference type="NCBIfam" id="TIGR00406">
    <property type="entry name" value="prmA"/>
    <property type="match status" value="1"/>
</dbReference>
<dbReference type="PANTHER" id="PTHR43648">
    <property type="entry name" value="ELECTRON TRANSFER FLAVOPROTEIN BETA SUBUNIT LYSINE METHYLTRANSFERASE"/>
    <property type="match status" value="1"/>
</dbReference>
<dbReference type="PANTHER" id="PTHR43648:SF1">
    <property type="entry name" value="ELECTRON TRANSFER FLAVOPROTEIN BETA SUBUNIT LYSINE METHYLTRANSFERASE"/>
    <property type="match status" value="1"/>
</dbReference>
<dbReference type="Pfam" id="PF06325">
    <property type="entry name" value="PrmA"/>
    <property type="match status" value="1"/>
</dbReference>
<dbReference type="PIRSF" id="PIRSF000401">
    <property type="entry name" value="RPL11_MTase"/>
    <property type="match status" value="1"/>
</dbReference>
<dbReference type="SUPFAM" id="SSF53335">
    <property type="entry name" value="S-adenosyl-L-methionine-dependent methyltransferases"/>
    <property type="match status" value="1"/>
</dbReference>
<evidence type="ECO:0000255" key="1">
    <source>
        <dbReference type="HAMAP-Rule" id="MF_00735"/>
    </source>
</evidence>
<keyword id="KW-0963">Cytoplasm</keyword>
<keyword id="KW-0489">Methyltransferase</keyword>
<keyword id="KW-0949">S-adenosyl-L-methionine</keyword>
<keyword id="KW-0808">Transferase</keyword>
<organism>
    <name type="scientific">Staphylococcus epidermidis (strain ATCC 12228 / FDA PCI 1200)</name>
    <dbReference type="NCBI Taxonomy" id="176280"/>
    <lineage>
        <taxon>Bacteria</taxon>
        <taxon>Bacillati</taxon>
        <taxon>Bacillota</taxon>
        <taxon>Bacilli</taxon>
        <taxon>Bacillales</taxon>
        <taxon>Staphylococcaceae</taxon>
        <taxon>Staphylococcus</taxon>
    </lineage>
</organism>
<protein>
    <recommendedName>
        <fullName evidence="1">Ribosomal protein L11 methyltransferase</fullName>
        <shortName evidence="1">L11 Mtase</shortName>
        <ecNumber evidence="1">2.1.1.-</ecNumber>
    </recommendedName>
</protein>
<comment type="function">
    <text evidence="1">Methylates ribosomal protein L11.</text>
</comment>
<comment type="catalytic activity">
    <reaction evidence="1">
        <text>L-lysyl-[protein] + 3 S-adenosyl-L-methionine = N(6),N(6),N(6)-trimethyl-L-lysyl-[protein] + 3 S-adenosyl-L-homocysteine + 3 H(+)</text>
        <dbReference type="Rhea" id="RHEA:54192"/>
        <dbReference type="Rhea" id="RHEA-COMP:9752"/>
        <dbReference type="Rhea" id="RHEA-COMP:13826"/>
        <dbReference type="ChEBI" id="CHEBI:15378"/>
        <dbReference type="ChEBI" id="CHEBI:29969"/>
        <dbReference type="ChEBI" id="CHEBI:57856"/>
        <dbReference type="ChEBI" id="CHEBI:59789"/>
        <dbReference type="ChEBI" id="CHEBI:61961"/>
    </reaction>
</comment>
<comment type="subcellular location">
    <subcellularLocation>
        <location evidence="1">Cytoplasm</location>
    </subcellularLocation>
</comment>
<comment type="similarity">
    <text evidence="1">Belongs to the methyltransferase superfamily. PrmA family.</text>
</comment>
<proteinExistence type="inferred from homology"/>
<feature type="chain" id="PRO_0000192309" description="Ribosomal protein L11 methyltransferase">
    <location>
        <begin position="1"/>
        <end position="312"/>
    </location>
</feature>
<feature type="binding site" evidence="1">
    <location>
        <position position="160"/>
    </location>
    <ligand>
        <name>S-adenosyl-L-methionine</name>
        <dbReference type="ChEBI" id="CHEBI:59789"/>
    </ligand>
</feature>
<feature type="binding site" evidence="1">
    <location>
        <position position="181"/>
    </location>
    <ligand>
        <name>S-adenosyl-L-methionine</name>
        <dbReference type="ChEBI" id="CHEBI:59789"/>
    </ligand>
</feature>
<feature type="binding site" evidence="1">
    <location>
        <position position="203"/>
    </location>
    <ligand>
        <name>S-adenosyl-L-methionine</name>
        <dbReference type="ChEBI" id="CHEBI:59789"/>
    </ligand>
</feature>
<feature type="binding site" evidence="1">
    <location>
        <position position="246"/>
    </location>
    <ligand>
        <name>S-adenosyl-L-methionine</name>
        <dbReference type="ChEBI" id="CHEBI:59789"/>
    </ligand>
</feature>